<reference key="1">
    <citation type="journal article" date="2011" name="J. Bacteriol.">
        <title>Genome sequence of Thermotoga sp. strain RQ2, a hyperthermophilic bacterium isolated from a geothermally heated region of the seafloor near Ribeira Quente, the Azores.</title>
        <authorList>
            <person name="Swithers K.S."/>
            <person name="DiPippo J.L."/>
            <person name="Bruce D.C."/>
            <person name="Detter C."/>
            <person name="Tapia R."/>
            <person name="Han S."/>
            <person name="Saunders E."/>
            <person name="Goodwin L.A."/>
            <person name="Han J."/>
            <person name="Woyke T."/>
            <person name="Pitluck S."/>
            <person name="Pennacchio L."/>
            <person name="Nolan M."/>
            <person name="Mikhailova N."/>
            <person name="Lykidis A."/>
            <person name="Land M.L."/>
            <person name="Brettin T."/>
            <person name="Stetter K.O."/>
            <person name="Nelson K.E."/>
            <person name="Gogarten J.P."/>
            <person name="Noll K.M."/>
        </authorList>
    </citation>
    <scope>NUCLEOTIDE SEQUENCE [LARGE SCALE GENOMIC DNA]</scope>
    <source>
        <strain>RQ2</strain>
    </source>
</reference>
<comment type="function">
    <text evidence="1">The alpha subunit is responsible for the aldol cleavage of indoleglycerol phosphate to indole and glyceraldehyde 3-phosphate.</text>
</comment>
<comment type="catalytic activity">
    <reaction evidence="1">
        <text>(1S,2R)-1-C-(indol-3-yl)glycerol 3-phosphate + L-serine = D-glyceraldehyde 3-phosphate + L-tryptophan + H2O</text>
        <dbReference type="Rhea" id="RHEA:10532"/>
        <dbReference type="ChEBI" id="CHEBI:15377"/>
        <dbReference type="ChEBI" id="CHEBI:33384"/>
        <dbReference type="ChEBI" id="CHEBI:57912"/>
        <dbReference type="ChEBI" id="CHEBI:58866"/>
        <dbReference type="ChEBI" id="CHEBI:59776"/>
        <dbReference type="EC" id="4.2.1.20"/>
    </reaction>
</comment>
<comment type="pathway">
    <text evidence="1">Amino-acid biosynthesis; L-tryptophan biosynthesis; L-tryptophan from chorismate: step 5/5.</text>
</comment>
<comment type="subunit">
    <text evidence="1">Tetramer of two alpha and two beta chains.</text>
</comment>
<comment type="similarity">
    <text evidence="1">Belongs to the TrpA family.</text>
</comment>
<protein>
    <recommendedName>
        <fullName evidence="1">Tryptophan synthase alpha chain</fullName>
        <ecNumber evidence="1">4.2.1.20</ecNumber>
    </recommendedName>
</protein>
<organism>
    <name type="scientific">Thermotoga sp. (strain RQ2)</name>
    <dbReference type="NCBI Taxonomy" id="126740"/>
    <lineage>
        <taxon>Bacteria</taxon>
        <taxon>Thermotogati</taxon>
        <taxon>Thermotogota</taxon>
        <taxon>Thermotogae</taxon>
        <taxon>Thermotogales</taxon>
        <taxon>Thermotogaceae</taxon>
        <taxon>Thermotoga</taxon>
    </lineage>
</organism>
<feature type="chain" id="PRO_1000095759" description="Tryptophan synthase alpha chain">
    <location>
        <begin position="1"/>
        <end position="239"/>
    </location>
</feature>
<feature type="active site" description="Proton acceptor" evidence="1">
    <location>
        <position position="34"/>
    </location>
</feature>
<feature type="active site" description="Proton acceptor" evidence="1">
    <location>
        <position position="45"/>
    </location>
</feature>
<dbReference type="EC" id="4.2.1.20" evidence="1"/>
<dbReference type="EMBL" id="CP000969">
    <property type="protein sequence ID" value="ACB09163.1"/>
    <property type="molecule type" value="Genomic_DNA"/>
</dbReference>
<dbReference type="RefSeq" id="WP_011943375.1">
    <property type="nucleotide sequence ID" value="NC_010483.1"/>
</dbReference>
<dbReference type="SMR" id="B1LA15"/>
<dbReference type="KEGG" id="trq:TRQ2_0811"/>
<dbReference type="HOGENOM" id="CLU_016734_0_0_0"/>
<dbReference type="UniPathway" id="UPA00035">
    <property type="reaction ID" value="UER00044"/>
</dbReference>
<dbReference type="Proteomes" id="UP000001687">
    <property type="component" value="Chromosome"/>
</dbReference>
<dbReference type="GO" id="GO:0005829">
    <property type="term" value="C:cytosol"/>
    <property type="evidence" value="ECO:0007669"/>
    <property type="project" value="TreeGrafter"/>
</dbReference>
<dbReference type="GO" id="GO:0004834">
    <property type="term" value="F:tryptophan synthase activity"/>
    <property type="evidence" value="ECO:0007669"/>
    <property type="project" value="UniProtKB-UniRule"/>
</dbReference>
<dbReference type="CDD" id="cd04724">
    <property type="entry name" value="Tryptophan_synthase_alpha"/>
    <property type="match status" value="1"/>
</dbReference>
<dbReference type="Gene3D" id="3.20.20.70">
    <property type="entry name" value="Aldolase class I"/>
    <property type="match status" value="1"/>
</dbReference>
<dbReference type="HAMAP" id="MF_00131">
    <property type="entry name" value="Trp_synth_alpha"/>
    <property type="match status" value="1"/>
</dbReference>
<dbReference type="InterPro" id="IPR013785">
    <property type="entry name" value="Aldolase_TIM"/>
</dbReference>
<dbReference type="InterPro" id="IPR011060">
    <property type="entry name" value="RibuloseP-bd_barrel"/>
</dbReference>
<dbReference type="InterPro" id="IPR018204">
    <property type="entry name" value="Trp_synthase_alpha_AS"/>
</dbReference>
<dbReference type="InterPro" id="IPR002028">
    <property type="entry name" value="Trp_synthase_suA"/>
</dbReference>
<dbReference type="NCBIfam" id="TIGR00262">
    <property type="entry name" value="trpA"/>
    <property type="match status" value="1"/>
</dbReference>
<dbReference type="PANTHER" id="PTHR43406:SF1">
    <property type="entry name" value="TRYPTOPHAN SYNTHASE ALPHA CHAIN, CHLOROPLASTIC"/>
    <property type="match status" value="1"/>
</dbReference>
<dbReference type="PANTHER" id="PTHR43406">
    <property type="entry name" value="TRYPTOPHAN SYNTHASE, ALPHA CHAIN"/>
    <property type="match status" value="1"/>
</dbReference>
<dbReference type="Pfam" id="PF00290">
    <property type="entry name" value="Trp_syntA"/>
    <property type="match status" value="1"/>
</dbReference>
<dbReference type="SUPFAM" id="SSF51366">
    <property type="entry name" value="Ribulose-phoshate binding barrel"/>
    <property type="match status" value="1"/>
</dbReference>
<dbReference type="PROSITE" id="PS00167">
    <property type="entry name" value="TRP_SYNTHASE_ALPHA"/>
    <property type="match status" value="1"/>
</dbReference>
<accession>B1LA15</accession>
<sequence>MKGFIAYIPAGFPDLETTRKILIALNELGITGVEIGVPFSDPVADGPVIQLAHSVALRNGVTMKKILEMLGEISVDYDLYLMSYLNPIVNYPEGKEKLLDELKKLGVKGLIIPDLPLREVKNVNIAYPIVPFVAPNTKDEEIEFINSVQAPFVYYISRYGVTGEREDLPFADHIKRVKERIKLPLFVGFGISRHEQVEKVWEIADGAIVGSALVRIMEESPKDEIPKKVVEKVKELLGK</sequence>
<evidence type="ECO:0000255" key="1">
    <source>
        <dbReference type="HAMAP-Rule" id="MF_00131"/>
    </source>
</evidence>
<gene>
    <name evidence="1" type="primary">trpA</name>
    <name type="ordered locus">TRQ2_0811</name>
</gene>
<name>TRPA_THESQ</name>
<keyword id="KW-0028">Amino-acid biosynthesis</keyword>
<keyword id="KW-0057">Aromatic amino acid biosynthesis</keyword>
<keyword id="KW-0456">Lyase</keyword>
<keyword id="KW-0822">Tryptophan biosynthesis</keyword>
<proteinExistence type="inferred from homology"/>